<protein>
    <recommendedName>
        <fullName evidence="19">N-alpha-acetyltransferase 50</fullName>
        <shortName evidence="16 17">hNaa50p</shortName>
        <ecNumber evidence="5 6 7 10">2.3.1.258</ecNumber>
    </recommendedName>
    <alternativeName>
        <fullName>N-acetyltransferase 13</fullName>
    </alternativeName>
    <alternativeName>
        <fullName evidence="14">N-acetyltransferase 5</fullName>
        <shortName evidence="14">hNAT5</shortName>
    </alternativeName>
    <alternativeName>
        <fullName evidence="14">N-acetyltransferase san homolog</fullName>
        <shortName evidence="14">hSAN</shortName>
    </alternativeName>
    <alternativeName>
        <fullName evidence="19">N-epsilon-acetyltransferase 50</fullName>
        <ecNumber evidence="5">2.3.1.-</ecNumber>
    </alternativeName>
    <alternativeName>
        <fullName>NatE catalytic subunit</fullName>
    </alternativeName>
</protein>
<evidence type="ECO:0000250" key="1">
    <source>
        <dbReference type="UniProtKB" id="Q6PGB6"/>
    </source>
</evidence>
<evidence type="ECO:0000255" key="2">
    <source>
        <dbReference type="PROSITE-ProRule" id="PRU00532"/>
    </source>
</evidence>
<evidence type="ECO:0000269" key="3">
    <source>
    </source>
</evidence>
<evidence type="ECO:0000269" key="4">
    <source>
    </source>
</evidence>
<evidence type="ECO:0000269" key="5">
    <source>
    </source>
</evidence>
<evidence type="ECO:0000269" key="6">
    <source>
    </source>
</evidence>
<evidence type="ECO:0000269" key="7">
    <source>
    </source>
</evidence>
<evidence type="ECO:0000269" key="8">
    <source>
    </source>
</evidence>
<evidence type="ECO:0000269" key="9">
    <source>
    </source>
</evidence>
<evidence type="ECO:0000269" key="10">
    <source>
    </source>
</evidence>
<evidence type="ECO:0000269" key="11">
    <source>
    </source>
</evidence>
<evidence type="ECO:0000269" key="12">
    <source>
    </source>
</evidence>
<evidence type="ECO:0000269" key="13">
    <source ref="19"/>
</evidence>
<evidence type="ECO:0000303" key="14">
    <source>
    </source>
</evidence>
<evidence type="ECO:0000303" key="15">
    <source>
    </source>
</evidence>
<evidence type="ECO:0000303" key="16">
    <source>
    </source>
</evidence>
<evidence type="ECO:0000303" key="17">
    <source>
    </source>
</evidence>
<evidence type="ECO:0000303" key="18">
    <source ref="19"/>
</evidence>
<evidence type="ECO:0000305" key="19"/>
<evidence type="ECO:0000312" key="20">
    <source>
        <dbReference type="HGNC" id="HGNC:29533"/>
    </source>
</evidence>
<evidence type="ECO:0007744" key="21">
    <source>
        <dbReference type="PDB" id="2OB0"/>
    </source>
</evidence>
<evidence type="ECO:0007744" key="22">
    <source>
        <dbReference type="PDB" id="2PSW"/>
    </source>
</evidence>
<evidence type="ECO:0007744" key="23">
    <source>
        <dbReference type="PDB" id="3TFY"/>
    </source>
</evidence>
<evidence type="ECO:0007744" key="24">
    <source>
        <dbReference type="PDB" id="4X5K"/>
    </source>
</evidence>
<evidence type="ECO:0007744" key="25">
    <source>
        <dbReference type="PDB" id="6PPL"/>
    </source>
</evidence>
<evidence type="ECO:0007744" key="26">
    <source>
        <dbReference type="PDB" id="6PW9"/>
    </source>
</evidence>
<evidence type="ECO:0007744" key="27">
    <source>
    </source>
</evidence>
<evidence type="ECO:0007744" key="28">
    <source>
    </source>
</evidence>
<evidence type="ECO:0007744" key="29">
    <source>
    </source>
</evidence>
<evidence type="ECO:0007744" key="30">
    <source>
    </source>
</evidence>
<evidence type="ECO:0007829" key="31">
    <source>
        <dbReference type="PDB" id="2OB0"/>
    </source>
</evidence>
<evidence type="ECO:0007829" key="32">
    <source>
        <dbReference type="PDB" id="6WF5"/>
    </source>
</evidence>
<evidence type="ECO:0007829" key="33">
    <source>
        <dbReference type="PDB" id="6WFN"/>
    </source>
</evidence>
<proteinExistence type="evidence at protein level"/>
<feature type="chain" id="PRO_0000284902" description="N-alpha-acetyltransferase 50">
    <location>
        <begin position="1"/>
        <end position="169"/>
    </location>
</feature>
<feature type="domain" description="N-acetyltransferase" evidence="2">
    <location>
        <begin position="6"/>
        <end position="155"/>
    </location>
</feature>
<feature type="active site" evidence="6">
    <location>
        <position position="73"/>
    </location>
</feature>
<feature type="active site" evidence="6">
    <location>
        <position position="112"/>
    </location>
</feature>
<feature type="binding site" evidence="6 10 23 24">
    <location>
        <position position="31"/>
    </location>
    <ligand>
        <name>substrate</name>
    </ligand>
</feature>
<feature type="binding site" evidence="6 10 23 24">
    <location>
        <position position="75"/>
    </location>
    <ligand>
        <name>substrate</name>
    </ligand>
</feature>
<feature type="binding site" evidence="6 10 13 22 23 24">
    <location>
        <begin position="77"/>
        <end position="90"/>
    </location>
    <ligand>
        <name>acetyl-CoA</name>
        <dbReference type="ChEBI" id="CHEBI:57288"/>
    </ligand>
</feature>
<feature type="binding site" evidence="6 10 13 22 23 24">
    <location>
        <begin position="117"/>
        <end position="126"/>
    </location>
    <ligand>
        <name>CoA</name>
        <dbReference type="ChEBI" id="CHEBI:57287"/>
    </ligand>
</feature>
<feature type="binding site" evidence="6 10 23 24">
    <location>
        <begin position="138"/>
        <end position="141"/>
    </location>
    <ligand>
        <name>substrate</name>
    </ligand>
</feature>
<feature type="modified residue" description="Phosphothreonine" evidence="29 30">
    <location>
        <position position="12"/>
    </location>
</feature>
<feature type="modified residue" description="N6-acetyllysine; by autocatalysis" evidence="5 28">
    <location>
        <position position="34"/>
    </location>
</feature>
<feature type="modified residue" description="N6-acetyllysine; by autocatalysis" evidence="5 28">
    <location>
        <position position="37"/>
    </location>
</feature>
<feature type="modified residue" description="Phosphotyrosine" evidence="27">
    <location>
        <position position="110"/>
    </location>
</feature>
<feature type="modified residue" description="N6-acetyllysine; by autocatalysis" evidence="5">
    <location>
        <position position="140"/>
    </location>
</feature>
<feature type="splice variant" id="VSP_024747" description="In isoform 2." evidence="15">
    <location>
        <begin position="35"/>
        <end position="122"/>
    </location>
</feature>
<feature type="mutagenesis site" description="Restores the acetylation activity of the NatA complex." evidence="12">
    <original>E</original>
    <variation>A</variation>
    <location>
        <position position="7"/>
    </location>
</feature>
<feature type="mutagenesis site" description="Abolishes N-alpha-acetyltransferase activity." evidence="6 9">
    <original>F</original>
    <variation>A</variation>
    <location>
        <position position="27"/>
    </location>
</feature>
<feature type="mutagenesis site" description="Strongly decreased N-alpha-acetyltransferase activity." evidence="6">
    <original>P</original>
    <variation>A</variation>
    <location>
        <position position="28"/>
    </location>
</feature>
<feature type="mutagenesis site" description="Strongly decreased N-alpha-acetyltransferase activity." evidence="6">
    <original>V</original>
    <variation>A</variation>
    <location>
        <position position="29"/>
    </location>
</feature>
<feature type="mutagenesis site" description="Abolishes N-alpha-acetyltransferase activity." evidence="6">
    <original>Y</original>
    <variation>A</variation>
    <location>
        <position position="31"/>
    </location>
</feature>
<feature type="mutagenesis site" description="Decreased acetylation; when associated with A-140." evidence="5">
    <original>KFYK</original>
    <variation>AFYA</variation>
    <location>
        <begin position="34"/>
        <end position="37"/>
    </location>
</feature>
<feature type="mutagenesis site" description="Abolishes N-alpha-acetyltransferase activity." evidence="6">
    <original>F</original>
    <variation>A</variation>
    <location>
        <position position="35"/>
    </location>
</feature>
<feature type="mutagenesis site" description="Restores the acetylation activity of the NatA complex." evidence="12">
    <original>D</original>
    <variation>A</variation>
    <location>
        <position position="53"/>
    </location>
</feature>
<feature type="mutagenesis site" description="Abolishes N-alpha-acetyltransferase activity." evidence="6 12">
    <original>Y</original>
    <variation>A</variation>
    <variation>F</variation>
    <location>
        <position position="73"/>
    </location>
</feature>
<feature type="mutagenesis site" description="Reduces N-alpha-acetyltransferase activity." evidence="12">
    <original>M</original>
    <variation>A</variation>
    <location>
        <position position="75"/>
    </location>
</feature>
<feature type="mutagenesis site" description="Strongly decreased N-alpha-acetyltransferase activity." evidence="5">
    <original>R</original>
    <variation>A</variation>
    <location>
        <position position="84"/>
    </location>
</feature>
<feature type="mutagenesis site" description="Abolishes N-alpha-acetyltransferase activity." evidence="6">
    <original>H</original>
    <variation>A</variation>
    <variation>F</variation>
    <location>
        <position position="112"/>
    </location>
</feature>
<feature type="mutagenesis site" description="Strongly decreased N-alpha-acetyltransferase activity. Impaired sister chromatid cohesion during mitosis." evidence="4 5 9">
    <original>Y</original>
    <variation>F</variation>
    <location>
        <position position="124"/>
    </location>
</feature>
<feature type="mutagenesis site" description="Abolishes N-alpha-acetyltransferase activity." evidence="12">
    <original>Y</original>
    <variation>A</variation>
    <location>
        <position position="138"/>
    </location>
</feature>
<feature type="mutagenesis site" description="Abolishes N-alpha-acetyltransferase activity." evidence="6 12">
    <original>Y</original>
    <variation>A</variation>
    <location>
        <position position="139"/>
    </location>
</feature>
<feature type="mutagenesis site" description="Decreased acetylation; when associated with 34-A-A-37." evidence="5">
    <original>K</original>
    <variation>A</variation>
    <location>
        <position position="140"/>
    </location>
</feature>
<feature type="mutagenesis site" description="Reduces N-alpha-acetyltransferase activity." evidence="6 12">
    <original>I</original>
    <variation>A</variation>
    <location>
        <position position="142"/>
    </location>
</feature>
<feature type="strand" evidence="33">
    <location>
        <begin position="6"/>
        <end position="10"/>
    </location>
</feature>
<feature type="turn" evidence="33">
    <location>
        <begin position="13"/>
        <end position="15"/>
    </location>
</feature>
<feature type="helix" evidence="33">
    <location>
        <begin position="16"/>
        <end position="26"/>
    </location>
</feature>
<feature type="helix" evidence="33">
    <location>
        <begin position="33"/>
        <end position="39"/>
    </location>
</feature>
<feature type="helix" evidence="33">
    <location>
        <begin position="43"/>
        <end position="45"/>
    </location>
</feature>
<feature type="strand" evidence="33">
    <location>
        <begin position="46"/>
        <end position="51"/>
    </location>
</feature>
<feature type="strand" evidence="33">
    <location>
        <begin position="54"/>
        <end position="66"/>
    </location>
</feature>
<feature type="strand" evidence="33">
    <location>
        <begin position="69"/>
        <end position="79"/>
    </location>
</feature>
<feature type="helix" evidence="33">
    <location>
        <begin position="81"/>
        <end position="83"/>
    </location>
</feature>
<feature type="strand" evidence="33">
    <location>
        <begin position="85"/>
        <end position="87"/>
    </location>
</feature>
<feature type="helix" evidence="33">
    <location>
        <begin position="88"/>
        <end position="103"/>
    </location>
</feature>
<feature type="strand" evidence="33">
    <location>
        <begin position="108"/>
        <end position="114"/>
    </location>
</feature>
<feature type="helix" evidence="33">
    <location>
        <begin position="118"/>
        <end position="125"/>
    </location>
</feature>
<feature type="turn" evidence="33">
    <location>
        <begin position="126"/>
        <end position="128"/>
    </location>
</feature>
<feature type="strand" evidence="33">
    <location>
        <begin position="130"/>
        <end position="135"/>
    </location>
</feature>
<feature type="strand" evidence="33">
    <location>
        <begin position="140"/>
        <end position="144"/>
    </location>
</feature>
<feature type="strand" evidence="33">
    <location>
        <begin position="147"/>
        <end position="153"/>
    </location>
</feature>
<feature type="strand" evidence="32">
    <location>
        <begin position="159"/>
        <end position="161"/>
    </location>
</feature>
<feature type="helix" evidence="31">
    <location>
        <begin position="162"/>
        <end position="164"/>
    </location>
</feature>
<feature type="modified residue" description="N6-acetyllysine" evidence="28">
    <location sequence="Q9GZZ1-2">
        <position position="34"/>
    </location>
</feature>
<reference key="1">
    <citation type="journal article" date="2004" name="Nat. Genet.">
        <title>Complete sequencing and characterization of 21,243 full-length human cDNAs.</title>
        <authorList>
            <person name="Ota T."/>
            <person name="Suzuki Y."/>
            <person name="Nishikawa T."/>
            <person name="Otsuki T."/>
            <person name="Sugiyama T."/>
            <person name="Irie R."/>
            <person name="Wakamatsu A."/>
            <person name="Hayashi K."/>
            <person name="Sato H."/>
            <person name="Nagai K."/>
            <person name="Kimura K."/>
            <person name="Makita H."/>
            <person name="Sekine M."/>
            <person name="Obayashi M."/>
            <person name="Nishi T."/>
            <person name="Shibahara T."/>
            <person name="Tanaka T."/>
            <person name="Ishii S."/>
            <person name="Yamamoto J."/>
            <person name="Saito K."/>
            <person name="Kawai Y."/>
            <person name="Isono Y."/>
            <person name="Nakamura Y."/>
            <person name="Nagahari K."/>
            <person name="Murakami K."/>
            <person name="Yasuda T."/>
            <person name="Iwayanagi T."/>
            <person name="Wagatsuma M."/>
            <person name="Shiratori A."/>
            <person name="Sudo H."/>
            <person name="Hosoiri T."/>
            <person name="Kaku Y."/>
            <person name="Kodaira H."/>
            <person name="Kondo H."/>
            <person name="Sugawara M."/>
            <person name="Takahashi M."/>
            <person name="Kanda K."/>
            <person name="Yokoi T."/>
            <person name="Furuya T."/>
            <person name="Kikkawa E."/>
            <person name="Omura Y."/>
            <person name="Abe K."/>
            <person name="Kamihara K."/>
            <person name="Katsuta N."/>
            <person name="Sato K."/>
            <person name="Tanikawa M."/>
            <person name="Yamazaki M."/>
            <person name="Ninomiya K."/>
            <person name="Ishibashi T."/>
            <person name="Yamashita H."/>
            <person name="Murakawa K."/>
            <person name="Fujimori K."/>
            <person name="Tanai H."/>
            <person name="Kimata M."/>
            <person name="Watanabe M."/>
            <person name="Hiraoka S."/>
            <person name="Chiba Y."/>
            <person name="Ishida S."/>
            <person name="Ono Y."/>
            <person name="Takiguchi S."/>
            <person name="Watanabe S."/>
            <person name="Yosida M."/>
            <person name="Hotuta T."/>
            <person name="Kusano J."/>
            <person name="Kanehori K."/>
            <person name="Takahashi-Fujii A."/>
            <person name="Hara H."/>
            <person name="Tanase T.-O."/>
            <person name="Nomura Y."/>
            <person name="Togiya S."/>
            <person name="Komai F."/>
            <person name="Hara R."/>
            <person name="Takeuchi K."/>
            <person name="Arita M."/>
            <person name="Imose N."/>
            <person name="Musashino K."/>
            <person name="Yuuki H."/>
            <person name="Oshima A."/>
            <person name="Sasaki N."/>
            <person name="Aotsuka S."/>
            <person name="Yoshikawa Y."/>
            <person name="Matsunawa H."/>
            <person name="Ichihara T."/>
            <person name="Shiohata N."/>
            <person name="Sano S."/>
            <person name="Moriya S."/>
            <person name="Momiyama H."/>
            <person name="Satoh N."/>
            <person name="Takami S."/>
            <person name="Terashima Y."/>
            <person name="Suzuki O."/>
            <person name="Nakagawa S."/>
            <person name="Senoh A."/>
            <person name="Mizoguchi H."/>
            <person name="Goto Y."/>
            <person name="Shimizu F."/>
            <person name="Wakebe H."/>
            <person name="Hishigaki H."/>
            <person name="Watanabe T."/>
            <person name="Sugiyama A."/>
            <person name="Takemoto M."/>
            <person name="Kawakami B."/>
            <person name="Yamazaki M."/>
            <person name="Watanabe K."/>
            <person name="Kumagai A."/>
            <person name="Itakura S."/>
            <person name="Fukuzumi Y."/>
            <person name="Fujimori Y."/>
            <person name="Komiyama M."/>
            <person name="Tashiro H."/>
            <person name="Tanigami A."/>
            <person name="Fujiwara T."/>
            <person name="Ono T."/>
            <person name="Yamada K."/>
            <person name="Fujii Y."/>
            <person name="Ozaki K."/>
            <person name="Hirao M."/>
            <person name="Ohmori Y."/>
            <person name="Kawabata A."/>
            <person name="Hikiji T."/>
            <person name="Kobatake N."/>
            <person name="Inagaki H."/>
            <person name="Ikema Y."/>
            <person name="Okamoto S."/>
            <person name="Okitani R."/>
            <person name="Kawakami T."/>
            <person name="Noguchi S."/>
            <person name="Itoh T."/>
            <person name="Shigeta K."/>
            <person name="Senba T."/>
            <person name="Matsumura K."/>
            <person name="Nakajima Y."/>
            <person name="Mizuno T."/>
            <person name="Morinaga M."/>
            <person name="Sasaki M."/>
            <person name="Togashi T."/>
            <person name="Oyama M."/>
            <person name="Hata H."/>
            <person name="Watanabe M."/>
            <person name="Komatsu T."/>
            <person name="Mizushima-Sugano J."/>
            <person name="Satoh T."/>
            <person name="Shirai Y."/>
            <person name="Takahashi Y."/>
            <person name="Nakagawa K."/>
            <person name="Okumura K."/>
            <person name="Nagase T."/>
            <person name="Nomura N."/>
            <person name="Kikuchi H."/>
            <person name="Masuho Y."/>
            <person name="Yamashita R."/>
            <person name="Nakai K."/>
            <person name="Yada T."/>
            <person name="Nakamura Y."/>
            <person name="Ohara O."/>
            <person name="Isogai T."/>
            <person name="Sugano S."/>
        </authorList>
    </citation>
    <scope>NUCLEOTIDE SEQUENCE [LARGE SCALE MRNA] (ISOFORM 1)</scope>
</reference>
<reference key="2">
    <citation type="journal article" date="2007" name="BMC Genomics">
        <title>The full-ORF clone resource of the German cDNA consortium.</title>
        <authorList>
            <person name="Bechtel S."/>
            <person name="Rosenfelder H."/>
            <person name="Duda A."/>
            <person name="Schmidt C.P."/>
            <person name="Ernst U."/>
            <person name="Wellenreuther R."/>
            <person name="Mehrle A."/>
            <person name="Schuster C."/>
            <person name="Bahr A."/>
            <person name="Bloecker H."/>
            <person name="Heubner D."/>
            <person name="Hoerlein A."/>
            <person name="Michel G."/>
            <person name="Wedler H."/>
            <person name="Koehrer K."/>
            <person name="Ottenwaelder B."/>
            <person name="Poustka A."/>
            <person name="Wiemann S."/>
            <person name="Schupp I."/>
        </authorList>
    </citation>
    <scope>NUCLEOTIDE SEQUENCE [LARGE SCALE MRNA] (ISOFORM 2)</scope>
    <source>
        <tissue>Small intestine</tissue>
    </source>
</reference>
<reference key="3">
    <citation type="submission" date="2005-09" db="EMBL/GenBank/DDBJ databases">
        <authorList>
            <person name="Mural R.J."/>
            <person name="Istrail S."/>
            <person name="Sutton G.G."/>
            <person name="Florea L."/>
            <person name="Halpern A.L."/>
            <person name="Mobarry C.M."/>
            <person name="Lippert R."/>
            <person name="Walenz B."/>
            <person name="Shatkay H."/>
            <person name="Dew I."/>
            <person name="Miller J.R."/>
            <person name="Flanigan M.J."/>
            <person name="Edwards N.J."/>
            <person name="Bolanos R."/>
            <person name="Fasulo D."/>
            <person name="Halldorsson B.V."/>
            <person name="Hannenhalli S."/>
            <person name="Turner R."/>
            <person name="Yooseph S."/>
            <person name="Lu F."/>
            <person name="Nusskern D.R."/>
            <person name="Shue B.C."/>
            <person name="Zheng X.H."/>
            <person name="Zhong F."/>
            <person name="Delcher A.L."/>
            <person name="Huson D.H."/>
            <person name="Kravitz S.A."/>
            <person name="Mouchard L."/>
            <person name="Reinert K."/>
            <person name="Remington K.A."/>
            <person name="Clark A.G."/>
            <person name="Waterman M.S."/>
            <person name="Eichler E.E."/>
            <person name="Adams M.D."/>
            <person name="Hunkapiller M.W."/>
            <person name="Myers E.W."/>
            <person name="Venter J.C."/>
        </authorList>
    </citation>
    <scope>NUCLEOTIDE SEQUENCE [LARGE SCALE GENOMIC DNA]</scope>
</reference>
<reference key="4">
    <citation type="journal article" date="2004" name="Genome Res.">
        <title>The status, quality, and expansion of the NIH full-length cDNA project: the Mammalian Gene Collection (MGC).</title>
        <authorList>
            <consortium name="The MGC Project Team"/>
        </authorList>
    </citation>
    <scope>NUCLEOTIDE SEQUENCE [LARGE SCALE MRNA] (ISOFORM 1)</scope>
    <source>
        <tissue>Lymph</tissue>
    </source>
</reference>
<reference key="5">
    <citation type="journal article" date="2005" name="Nat. Biotechnol.">
        <title>Immunoaffinity profiling of tyrosine phosphorylation in cancer cells.</title>
        <authorList>
            <person name="Rush J."/>
            <person name="Moritz A."/>
            <person name="Lee K.A."/>
            <person name="Guo A."/>
            <person name="Goss V.L."/>
            <person name="Spek E.J."/>
            <person name="Zhang H."/>
            <person name="Zha X.-M."/>
            <person name="Polakiewicz R.D."/>
            <person name="Comb M.J."/>
        </authorList>
    </citation>
    <scope>PHOSPHORYLATION [LARGE SCALE ANALYSIS] AT TYR-110</scope>
    <scope>IDENTIFICATION BY MASS SPECTROMETRY [LARGE SCALE ANALYSIS]</scope>
</reference>
<reference key="6">
    <citation type="journal article" date="2006" name="Gene">
        <title>Cloning and characterization of hNAT5/hSAN: an evolutionarily conserved component of the NatA protein N-alpha-acetyltransferase complex.</title>
        <authorList>
            <person name="Arnesen T."/>
            <person name="Anderson D."/>
            <person name="Torsvik J."/>
            <person name="Halseth H.B."/>
            <person name="Varhaug J.E."/>
            <person name="Lillehaug J.R."/>
        </authorList>
    </citation>
    <scope>IDENTIFICATION BY MASS SPECTROMETRY</scope>
    <scope>FUNCTION</scope>
    <scope>SUBUNIT</scope>
    <scope>IDENTIFICATION IN THE N-TERMINAL ACETYLTRANSFERASE E COMPLEX</scope>
    <scope>INTERACTION WITH NAA15 AND NAA11</scope>
    <scope>SUBCELLULAR LOCATION</scope>
</reference>
<reference key="7">
    <citation type="journal article" date="2007" name="J. Cell Biol.">
        <title>The acetyltransferase activity of San stabilizes the mitotic cohesin at the centromeres in a shugoshin-independent manner.</title>
        <authorList>
            <person name="Hou F."/>
            <person name="Chu C.W."/>
            <person name="Kong X."/>
            <person name="Yokomori K."/>
            <person name="Zou H."/>
        </authorList>
    </citation>
    <scope>FUNCTION</scope>
    <scope>SUBCELLULAR LOCATION</scope>
    <scope>MUTAGENESIS OF TYR-124</scope>
</reference>
<reference key="8">
    <citation type="journal article" date="2008" name="Proc. Natl. Acad. Sci. U.S.A.">
        <title>A quantitative atlas of mitotic phosphorylation.</title>
        <authorList>
            <person name="Dephoure N."/>
            <person name="Zhou C."/>
            <person name="Villen J."/>
            <person name="Beausoleil S.A."/>
            <person name="Bakalarski C.E."/>
            <person name="Elledge S.J."/>
            <person name="Gygi S.P."/>
        </authorList>
    </citation>
    <scope>IDENTIFICATION BY MASS SPECTROMETRY [LARGE SCALE ANALYSIS]</scope>
    <source>
        <tissue>Cervix carcinoma</tissue>
    </source>
</reference>
<reference key="9">
    <citation type="journal article" date="2009" name="BMC Proc.">
        <title>A synopsis of eukaryotic Nalpha-terminal acetyltransferases: nomenclature, subunits and substrates.</title>
        <authorList>
            <person name="Polevoda B."/>
            <person name="Arnesen T."/>
            <person name="Sherman F."/>
        </authorList>
    </citation>
    <scope>NOMENCLATURE</scope>
</reference>
<reference key="10">
    <citation type="journal article" date="2009" name="J. Biol. Chem.">
        <title>Human Naa50p (Nat5/San) displays both protein N alpha- and N epsilon-acetyltransferase activity.</title>
        <authorList>
            <person name="Evjenth R."/>
            <person name="Hole K."/>
            <person name="Karlsen O.A."/>
            <person name="Ziegler M."/>
            <person name="Arnesen T."/>
            <person name="Lillehaug J.R."/>
        </authorList>
    </citation>
    <scope>FUNCTION</scope>
    <scope>CATALYTIC ACTIVITY</scope>
    <scope>BIOPHYSICOCHEMICAL PROPERTIES</scope>
    <scope>ACETYLATION AT LYS-34; LYS-37 AND LYS-140</scope>
    <scope>MUTAGENESIS OF 34-LYS--LYS-37; ARG-84; TYR-124 AND LYS-140</scope>
</reference>
<reference key="11">
    <citation type="journal article" date="2009" name="Science">
        <title>Lysine acetylation targets protein complexes and co-regulates major cellular functions.</title>
        <authorList>
            <person name="Choudhary C."/>
            <person name="Kumar C."/>
            <person name="Gnad F."/>
            <person name="Nielsen M.L."/>
            <person name="Rehman M."/>
            <person name="Walther T.C."/>
            <person name="Olsen J.V."/>
            <person name="Mann M."/>
        </authorList>
    </citation>
    <scope>ACETYLATION [LARGE SCALE ANALYSIS] AT LYS-34 AND LYS-37</scope>
    <scope>ACETYLATION [LARGE SCALE ANALYSIS] AT LYS-34 (ISOFORM 2)</scope>
    <scope>IDENTIFICATION BY MASS SPECTROMETRY [LARGE SCALE ANALYSIS]</scope>
</reference>
<reference key="12">
    <citation type="journal article" date="2010" name="Sci. Signal.">
        <title>Quantitative phosphoproteomics reveals widespread full phosphorylation site occupancy during mitosis.</title>
        <authorList>
            <person name="Olsen J.V."/>
            <person name="Vermeulen M."/>
            <person name="Santamaria A."/>
            <person name="Kumar C."/>
            <person name="Miller M.L."/>
            <person name="Jensen L.J."/>
            <person name="Gnad F."/>
            <person name="Cox J."/>
            <person name="Jensen T.S."/>
            <person name="Nigg E.A."/>
            <person name="Brunak S."/>
            <person name="Mann M."/>
        </authorList>
    </citation>
    <scope>PHOSPHORYLATION [LARGE SCALE ANALYSIS] AT THR-12</scope>
    <scope>IDENTIFICATION BY MASS SPECTROMETRY [LARGE SCALE ANALYSIS]</scope>
    <source>
        <tissue>Cervix carcinoma</tissue>
    </source>
</reference>
<reference key="13">
    <citation type="journal article" date="2011" name="BMC Syst. Biol.">
        <title>Initial characterization of the human central proteome.</title>
        <authorList>
            <person name="Burkard T.R."/>
            <person name="Planyavsky M."/>
            <person name="Kaupe I."/>
            <person name="Breitwieser F.P."/>
            <person name="Buerckstuemmer T."/>
            <person name="Bennett K.L."/>
            <person name="Superti-Furga G."/>
            <person name="Colinge J."/>
        </authorList>
    </citation>
    <scope>IDENTIFICATION BY MASS SPECTROMETRY [LARGE SCALE ANALYSIS]</scope>
</reference>
<reference key="14">
    <citation type="journal article" date="2012" name="J. Biol. Chem.">
        <title>Human protein N-terminal acetyltransferase hNaa50p (hNAT5/hSAN) follows ordered sequential catalytic mechanism: combined kinetic and NMR study.</title>
        <authorList>
            <person name="Evjenth R.H."/>
            <person name="Brenner A.K."/>
            <person name="Thompson P.R."/>
            <person name="Arnesen T."/>
            <person name="Froeystein N.A."/>
            <person name="Lillehaug J.R."/>
        </authorList>
    </citation>
    <scope>FUNCTION</scope>
    <scope>CATALYTIC ACTIVITY</scope>
    <scope>BIOPHYSICOCHEMICAL PROPERTIES</scope>
</reference>
<reference key="15">
    <citation type="journal article" date="2013" name="J. Proteome Res.">
        <title>Toward a comprehensive characterization of a human cancer cell phosphoproteome.</title>
        <authorList>
            <person name="Zhou H."/>
            <person name="Di Palma S."/>
            <person name="Preisinger C."/>
            <person name="Peng M."/>
            <person name="Polat A.N."/>
            <person name="Heck A.J."/>
            <person name="Mohammed S."/>
        </authorList>
    </citation>
    <scope>PHOSPHORYLATION [LARGE SCALE ANALYSIS] AT THR-12</scope>
    <scope>IDENTIFICATION BY MASS SPECTROMETRY [LARGE SCALE ANALYSIS]</scope>
    <source>
        <tissue>Cervix carcinoma</tissue>
        <tissue>Erythroleukemia</tissue>
    </source>
</reference>
<reference key="16">
    <citation type="journal article" date="2015" name="Cell Rep.">
        <title>An organellar nalpha-acetyltransferase, naa60, acetylates cytosolic N termini of transmembrane proteins and maintains Golgi integrity.</title>
        <authorList>
            <person name="Aksnes H."/>
            <person name="Van Damme P."/>
            <person name="Goris M."/>
            <person name="Starheim K.K."/>
            <person name="Marie M."/>
            <person name="Stoeve S.I."/>
            <person name="Hoel C."/>
            <person name="Kalvik T.V."/>
            <person name="Hole K."/>
            <person name="Glomnes N."/>
            <person name="Furnes C."/>
            <person name="Ljostveit S."/>
            <person name="Ziegler M."/>
            <person name="Niere M."/>
            <person name="Gevaert K."/>
            <person name="Arnesen T."/>
        </authorList>
    </citation>
    <scope>SUBCELLULAR LOCATION</scope>
</reference>
<reference key="17">
    <citation type="journal article" date="2016" name="J. Biol. Chem.">
        <title>Opposing functions of the N-terminal acetyltransferases Naa50 and NatA in sister-chromatid cohesion.</title>
        <authorList>
            <person name="Rong Z."/>
            <person name="Ouyang Z."/>
            <person name="Magin R.S."/>
            <person name="Marmorstein R."/>
            <person name="Yu H."/>
        </authorList>
    </citation>
    <scope>FUNCTION</scope>
    <scope>SUBCELLULAR LOCATION</scope>
    <scope>MUTAGENESIS OF PHE-27 AND TYR-124</scope>
</reference>
<reference key="18">
    <citation type="journal article" date="2018" name="Structure">
        <title>Structure of Human NatA and Its Regulation by the Huntingtin Interacting Protein HYPK.</title>
        <authorList>
            <person name="Gottlieb L."/>
            <person name="Marmorstein R."/>
        </authorList>
    </citation>
    <scope>FUNCTION</scope>
    <scope>IDENTIFICATION IN THE N-TERMINAL ACETYLTRANSFERASE E COMPLEX</scope>
    <scope>INTERACTION WITH NAA15</scope>
</reference>
<reference evidence="21 22" key="19">
    <citation type="submission" date="2007-06" db="PDB data bank">
        <title>Structure of human MAK3 homolog.</title>
        <authorList>
            <consortium name="Structural genomics consortium (SGC)"/>
        </authorList>
    </citation>
    <scope>X-RAY CRYSTALLOGRAPHY (1.8 ANGSTROMS) IN COMPLEX WITH COENZYME A</scope>
</reference>
<reference evidence="23" key="20">
    <citation type="journal article" date="2011" name="J. Biol. Chem.">
        <title>Structure of a ternary Naa50p (NAT5/SAN) N-terminal acetyltransferase complex reveals the molecular basis for substrate-specific acetylation.</title>
        <authorList>
            <person name="Liszczak G."/>
            <person name="Arnesen T."/>
            <person name="Marmorstein R."/>
        </authorList>
    </citation>
    <scope>X-RAY CRYSTALLOGRAPHY (2.75 ANGSTROMS) IN COMPLEX WITH COENZYME A AND SUBSTRATE PEPTIDE</scope>
    <scope>FUNCTION</scope>
    <scope>CATALYTIC ACTIVITY</scope>
    <scope>BIOPHYSICOCHEMICAL PROPERTIES</scope>
    <scope>ACTIVE SITE</scope>
    <scope>MUTAGENESIS OF PHE-27; PRO-28; VAL-29; TYR-31; PHE-35; TYR-73; HIS-112; TYR-139 AND ILE-142</scope>
</reference>
<reference evidence="24" key="21">
    <citation type="journal article" date="2016" name="J. Biol. Chem.">
        <title>Human Naa50 protein displays broad substrate specificity for amino-terminal acetylation: detailed structural and biochemical analysis using tetrapeptide library.</title>
        <authorList>
            <person name="Reddi R."/>
            <person name="Saddanapu V."/>
            <person name="Chinthapalli D.K."/>
            <person name="Sankoju P."/>
            <person name="Sripadi P."/>
            <person name="Addlagatta A."/>
        </authorList>
    </citation>
    <scope>X-RAY CRYSTALLOGRAPHY (2.49 ANGSTROMS) IN COMPLEX WITH COENZYME A AND SUBSTRATE PEPTIDE</scope>
    <scope>BIOPHYSICOCHEMICAL PROPERTIES</scope>
    <scope>FUNCTION</scope>
    <scope>CATALYTIC ACTIVITY</scope>
</reference>
<reference evidence="25 26" key="22">
    <citation type="journal article" date="2020" name="Nat. Commun.">
        <title>Molecular basis for N-terminal acetylation by human NatE and its modulation by HYPK.</title>
        <authorList>
            <person name="Deng S."/>
            <person name="McTiernan N."/>
            <person name="Wei X."/>
            <person name="Arnesen T."/>
            <person name="Marmorstein R."/>
        </authorList>
    </citation>
    <scope>STRUCTURE BY ELECTRON MICROSCOPY (3.02 ANGSTROMS)</scope>
    <scope>FUNCTION</scope>
    <scope>IDENTIFICATION IN THE N-TERMINAL ACETYLTRANSFERASE E COMPLEX</scope>
    <scope>IDENTIFICATION IN THE N-TERMINAL ACETYLTRANSFERASE E/HYPK COMPLEX</scope>
    <scope>INTERACTION WITH NAA10 AND NAA15</scope>
    <scope>MUTAGENESIS OF GLU-7; ASP-53; TYR-73; MET-75; TYR-138; TYR-139 AND ILE-142</scope>
</reference>
<dbReference type="EC" id="2.3.1.258" evidence="5 6 7 10"/>
<dbReference type="EC" id="2.3.1.-" evidence="5"/>
<dbReference type="EMBL" id="AK023090">
    <property type="protein sequence ID" value="BAB14397.1"/>
    <property type="molecule type" value="mRNA"/>
</dbReference>
<dbReference type="EMBL" id="AK023256">
    <property type="protein sequence ID" value="BAB14490.1"/>
    <property type="molecule type" value="mRNA"/>
</dbReference>
<dbReference type="EMBL" id="CR749314">
    <property type="protein sequence ID" value="CAH18169.1"/>
    <property type="molecule type" value="mRNA"/>
</dbReference>
<dbReference type="EMBL" id="CH471052">
    <property type="protein sequence ID" value="EAW79629.1"/>
    <property type="molecule type" value="Genomic_DNA"/>
</dbReference>
<dbReference type="EMBL" id="CH471052">
    <property type="protein sequence ID" value="EAW79630.1"/>
    <property type="molecule type" value="Genomic_DNA"/>
</dbReference>
<dbReference type="EMBL" id="BC012731">
    <property type="protein sequence ID" value="AAH12731.1"/>
    <property type="molecule type" value="mRNA"/>
</dbReference>
<dbReference type="CCDS" id="CCDS2975.1">
    <molecule id="Q9GZZ1-1"/>
</dbReference>
<dbReference type="RefSeq" id="NP_079422.1">
    <molecule id="Q9GZZ1-1"/>
    <property type="nucleotide sequence ID" value="NM_025146.4"/>
</dbReference>
<dbReference type="PDB" id="2OB0">
    <property type="method" value="X-ray"/>
    <property type="resolution" value="1.80 A"/>
    <property type="chains" value="A/B/C=2-169"/>
</dbReference>
<dbReference type="PDB" id="2PSW">
    <property type="method" value="X-ray"/>
    <property type="resolution" value="2.10 A"/>
    <property type="chains" value="A/B/C=2-169"/>
</dbReference>
<dbReference type="PDB" id="3TFY">
    <property type="method" value="X-ray"/>
    <property type="resolution" value="2.75 A"/>
    <property type="chains" value="A/B/C=1-169"/>
</dbReference>
<dbReference type="PDB" id="4X5K">
    <property type="method" value="X-ray"/>
    <property type="resolution" value="2.49 A"/>
    <property type="chains" value="A=1-169"/>
</dbReference>
<dbReference type="PDB" id="6PPL">
    <property type="method" value="EM"/>
    <property type="resolution" value="3.02 A"/>
    <property type="chains" value="A=1-169"/>
</dbReference>
<dbReference type="PDB" id="6PW9">
    <property type="method" value="EM"/>
    <property type="resolution" value="4.03 A"/>
    <property type="chains" value="A=1-169"/>
</dbReference>
<dbReference type="PDB" id="6WF3">
    <property type="method" value="X-ray"/>
    <property type="resolution" value="2.29 A"/>
    <property type="chains" value="A/B/C/D/E/F=1-169"/>
</dbReference>
<dbReference type="PDB" id="6WF5">
    <property type="method" value="X-ray"/>
    <property type="resolution" value="2.04 A"/>
    <property type="chains" value="A/B=1-169"/>
</dbReference>
<dbReference type="PDB" id="6WFG">
    <property type="method" value="X-ray"/>
    <property type="resolution" value="2.16 A"/>
    <property type="chains" value="A/C/E=1-169"/>
</dbReference>
<dbReference type="PDB" id="6WFK">
    <property type="method" value="X-ray"/>
    <property type="resolution" value="1.87 A"/>
    <property type="chains" value="A/B/C=1-169"/>
</dbReference>
<dbReference type="PDB" id="6WFN">
    <property type="method" value="X-ray"/>
    <property type="resolution" value="1.07 A"/>
    <property type="chains" value="A=1-169"/>
</dbReference>
<dbReference type="PDB" id="6WFO">
    <property type="method" value="X-ray"/>
    <property type="resolution" value="1.85 A"/>
    <property type="chains" value="A/B/C=1-169"/>
</dbReference>
<dbReference type="PDB" id="9F1B">
    <property type="method" value="EM"/>
    <property type="resolution" value="3.01 A"/>
    <property type="chains" value="DA=1-169"/>
</dbReference>
<dbReference type="PDB" id="9F1C">
    <property type="method" value="EM"/>
    <property type="resolution" value="3.78 A"/>
    <property type="chains" value="DA=1-169"/>
</dbReference>
<dbReference type="PDB" id="9F1D">
    <property type="method" value="EM"/>
    <property type="resolution" value="3.26 A"/>
    <property type="chains" value="DA=1-169"/>
</dbReference>
<dbReference type="PDBsum" id="2OB0"/>
<dbReference type="PDBsum" id="2PSW"/>
<dbReference type="PDBsum" id="3TFY"/>
<dbReference type="PDBsum" id="4X5K"/>
<dbReference type="PDBsum" id="6PPL"/>
<dbReference type="PDBsum" id="6PW9"/>
<dbReference type="PDBsum" id="6WF3"/>
<dbReference type="PDBsum" id="6WF5"/>
<dbReference type="PDBsum" id="6WFG"/>
<dbReference type="PDBsum" id="6WFK"/>
<dbReference type="PDBsum" id="6WFN"/>
<dbReference type="PDBsum" id="6WFO"/>
<dbReference type="PDBsum" id="9F1B"/>
<dbReference type="PDBsum" id="9F1C"/>
<dbReference type="PDBsum" id="9F1D"/>
<dbReference type="BMRB" id="Q9GZZ1"/>
<dbReference type="EMDB" id="EMD-20442"/>
<dbReference type="EMDB" id="EMD-20501"/>
<dbReference type="EMDB" id="EMD-50124"/>
<dbReference type="EMDB" id="EMD-50125"/>
<dbReference type="EMDB" id="EMD-50126"/>
<dbReference type="SMR" id="Q9GZZ1"/>
<dbReference type="BioGRID" id="123185">
    <property type="interactions" value="134"/>
</dbReference>
<dbReference type="CORUM" id="Q9GZZ1"/>
<dbReference type="FunCoup" id="Q9GZZ1">
    <property type="interactions" value="3380"/>
</dbReference>
<dbReference type="IntAct" id="Q9GZZ1">
    <property type="interactions" value="54"/>
</dbReference>
<dbReference type="MINT" id="Q9GZZ1"/>
<dbReference type="STRING" id="9606.ENSP00000240922"/>
<dbReference type="BindingDB" id="Q9GZZ1"/>
<dbReference type="ChEMBL" id="CHEMBL4630854"/>
<dbReference type="GlyGen" id="Q9GZZ1">
    <property type="glycosylation" value="1 site, 1 O-linked glycan (1 site)"/>
</dbReference>
<dbReference type="iPTMnet" id="Q9GZZ1"/>
<dbReference type="PhosphoSitePlus" id="Q9GZZ1"/>
<dbReference type="SwissPalm" id="Q9GZZ1"/>
<dbReference type="BioMuta" id="NAA50"/>
<dbReference type="DMDM" id="74733509"/>
<dbReference type="jPOST" id="Q9GZZ1"/>
<dbReference type="MassIVE" id="Q9GZZ1"/>
<dbReference type="PaxDb" id="9606-ENSP00000240922"/>
<dbReference type="PeptideAtlas" id="Q9GZZ1"/>
<dbReference type="ProteomicsDB" id="80182">
    <molecule id="Q9GZZ1-1"/>
</dbReference>
<dbReference type="ProteomicsDB" id="80183">
    <molecule id="Q9GZZ1-2"/>
</dbReference>
<dbReference type="Pumba" id="Q9GZZ1"/>
<dbReference type="Antibodypedia" id="32596">
    <property type="antibodies" value="164 antibodies from 28 providers"/>
</dbReference>
<dbReference type="DNASU" id="80218"/>
<dbReference type="Ensembl" id="ENST00000240922.8">
    <molecule id="Q9GZZ1-1"/>
    <property type="protein sequence ID" value="ENSP00000240922.2"/>
    <property type="gene ID" value="ENSG00000121579.14"/>
</dbReference>
<dbReference type="GeneID" id="80218"/>
<dbReference type="KEGG" id="hsa:80218"/>
<dbReference type="MANE-Select" id="ENST00000240922.8">
    <property type="protein sequence ID" value="ENSP00000240922.2"/>
    <property type="RefSeq nucleotide sequence ID" value="NM_025146.4"/>
    <property type="RefSeq protein sequence ID" value="NP_079422.1"/>
</dbReference>
<dbReference type="UCSC" id="uc003ean.3">
    <molecule id="Q9GZZ1-1"/>
    <property type="organism name" value="human"/>
</dbReference>
<dbReference type="AGR" id="HGNC:29533"/>
<dbReference type="CTD" id="80218"/>
<dbReference type="DisGeNET" id="80218"/>
<dbReference type="GeneCards" id="NAA50"/>
<dbReference type="HGNC" id="HGNC:29533">
    <property type="gene designation" value="NAA50"/>
</dbReference>
<dbReference type="HPA" id="ENSG00000121579">
    <property type="expression patterns" value="Tissue enhanced (skeletal)"/>
</dbReference>
<dbReference type="MalaCards" id="NAA50"/>
<dbReference type="MIM" id="610834">
    <property type="type" value="gene"/>
</dbReference>
<dbReference type="neXtProt" id="NX_Q9GZZ1"/>
<dbReference type="OpenTargets" id="ENSG00000121579"/>
<dbReference type="PharmGKB" id="PA165697846"/>
<dbReference type="VEuPathDB" id="HostDB:ENSG00000121579"/>
<dbReference type="eggNOG" id="KOG3138">
    <property type="taxonomic scope" value="Eukaryota"/>
</dbReference>
<dbReference type="GeneTree" id="ENSGT00390000009110"/>
<dbReference type="InParanoid" id="Q9GZZ1"/>
<dbReference type="OMA" id="ICCRLET"/>
<dbReference type="OrthoDB" id="47374at2759"/>
<dbReference type="PAN-GO" id="Q9GZZ1">
    <property type="GO annotations" value="5 GO annotations based on evolutionary models"/>
</dbReference>
<dbReference type="PhylomeDB" id="Q9GZZ1"/>
<dbReference type="TreeFam" id="TF314841"/>
<dbReference type="BioCyc" id="MetaCyc:ENSG00000121579-MONOMER"/>
<dbReference type="BRENDA" id="2.3.1.258">
    <property type="organism ID" value="2681"/>
</dbReference>
<dbReference type="PathwayCommons" id="Q9GZZ1"/>
<dbReference type="SignaLink" id="Q9GZZ1"/>
<dbReference type="BioGRID-ORCS" id="80218">
    <property type="hits" value="814 hits in 1164 CRISPR screens"/>
</dbReference>
<dbReference type="ChiTaRS" id="NAA50">
    <property type="organism name" value="human"/>
</dbReference>
<dbReference type="EvolutionaryTrace" id="Q9GZZ1"/>
<dbReference type="GenomeRNAi" id="80218"/>
<dbReference type="Pharos" id="Q9GZZ1">
    <property type="development level" value="Tchem"/>
</dbReference>
<dbReference type="PRO" id="PR:Q9GZZ1"/>
<dbReference type="Proteomes" id="UP000005640">
    <property type="component" value="Chromosome 3"/>
</dbReference>
<dbReference type="RNAct" id="Q9GZZ1">
    <property type="molecule type" value="protein"/>
</dbReference>
<dbReference type="Bgee" id="ENSG00000121579">
    <property type="expression patterns" value="Expressed in skeletal muscle tissue of rectus abdominis and 213 other cell types or tissues"/>
</dbReference>
<dbReference type="ExpressionAtlas" id="Q9GZZ1">
    <property type="expression patterns" value="baseline and differential"/>
</dbReference>
<dbReference type="GO" id="GO:0005737">
    <property type="term" value="C:cytoplasm"/>
    <property type="evidence" value="ECO:0000314"/>
    <property type="project" value="UniProtKB"/>
</dbReference>
<dbReference type="GO" id="GO:0005829">
    <property type="term" value="C:cytosol"/>
    <property type="evidence" value="ECO:0000314"/>
    <property type="project" value="UniProtKB"/>
</dbReference>
<dbReference type="GO" id="GO:0070062">
    <property type="term" value="C:extracellular exosome"/>
    <property type="evidence" value="ECO:0007005"/>
    <property type="project" value="UniProtKB"/>
</dbReference>
<dbReference type="GO" id="GO:0031415">
    <property type="term" value="C:NatA complex"/>
    <property type="evidence" value="ECO:0000314"/>
    <property type="project" value="GO_Central"/>
</dbReference>
<dbReference type="GO" id="GO:0005730">
    <property type="term" value="C:nucleolus"/>
    <property type="evidence" value="ECO:0000314"/>
    <property type="project" value="HPA"/>
</dbReference>
<dbReference type="GO" id="GO:0005634">
    <property type="term" value="C:nucleus"/>
    <property type="evidence" value="ECO:0000314"/>
    <property type="project" value="UniProtKB"/>
</dbReference>
<dbReference type="GO" id="GO:0010485">
    <property type="term" value="F:histone H4 acetyltransferase activity"/>
    <property type="evidence" value="ECO:0000314"/>
    <property type="project" value="UniProtKB"/>
</dbReference>
<dbReference type="GO" id="GO:0120518">
    <property type="term" value="F:protein N-terminal-methionine acetyltransferase activity"/>
    <property type="evidence" value="ECO:0007669"/>
    <property type="project" value="UniProtKB-EC"/>
</dbReference>
<dbReference type="GO" id="GO:0061733">
    <property type="term" value="F:protein-lysine-acetyltransferase activity"/>
    <property type="evidence" value="ECO:0000314"/>
    <property type="project" value="UniProtKB"/>
</dbReference>
<dbReference type="GO" id="GO:0004596">
    <property type="term" value="F:protein-N-terminal amino-acid acetyltransferase activity"/>
    <property type="evidence" value="ECO:0000314"/>
    <property type="project" value="UniProtKB"/>
</dbReference>
<dbReference type="GO" id="GO:0034087">
    <property type="term" value="P:establishment of mitotic sister chromatid cohesion"/>
    <property type="evidence" value="ECO:0000314"/>
    <property type="project" value="UniProtKB"/>
</dbReference>
<dbReference type="GO" id="GO:0007064">
    <property type="term" value="P:mitotic sister chromatid cohesion"/>
    <property type="evidence" value="ECO:0000318"/>
    <property type="project" value="GO_Central"/>
</dbReference>
<dbReference type="GO" id="GO:0071962">
    <property type="term" value="P:mitotic sister chromatid cohesion, centromeric"/>
    <property type="evidence" value="ECO:0000314"/>
    <property type="project" value="UniProtKB"/>
</dbReference>
<dbReference type="GO" id="GO:0006474">
    <property type="term" value="P:N-terminal protein amino acid acetylation"/>
    <property type="evidence" value="ECO:0000314"/>
    <property type="project" value="UniProtKB"/>
</dbReference>
<dbReference type="GO" id="GO:0043687">
    <property type="term" value="P:post-translational protein modification"/>
    <property type="evidence" value="ECO:0007669"/>
    <property type="project" value="Ensembl"/>
</dbReference>
<dbReference type="CDD" id="cd04301">
    <property type="entry name" value="NAT_SF"/>
    <property type="match status" value="1"/>
</dbReference>
<dbReference type="FunFam" id="3.40.630.30:FF:000078">
    <property type="entry name" value="N-alpha-acetyltransferase 50"/>
    <property type="match status" value="1"/>
</dbReference>
<dbReference type="Gene3D" id="3.40.630.30">
    <property type="match status" value="1"/>
</dbReference>
<dbReference type="InterPro" id="IPR016181">
    <property type="entry name" value="Acyl_CoA_acyltransferase"/>
</dbReference>
<dbReference type="InterPro" id="IPR000182">
    <property type="entry name" value="GNAT_dom"/>
</dbReference>
<dbReference type="InterPro" id="IPR051556">
    <property type="entry name" value="N-term/lysine_N-AcTrnsfr"/>
</dbReference>
<dbReference type="PANTHER" id="PTHR42919">
    <property type="entry name" value="N-ALPHA-ACETYLTRANSFERASE"/>
    <property type="match status" value="1"/>
</dbReference>
<dbReference type="PANTHER" id="PTHR42919:SF41">
    <property type="entry name" value="N-ALPHA-ACETYLTRANSFERASE 50"/>
    <property type="match status" value="1"/>
</dbReference>
<dbReference type="Pfam" id="PF00583">
    <property type="entry name" value="Acetyltransf_1"/>
    <property type="match status" value="1"/>
</dbReference>
<dbReference type="SUPFAM" id="SSF55729">
    <property type="entry name" value="Acyl-CoA N-acyltransferases (Nat)"/>
    <property type="match status" value="1"/>
</dbReference>
<dbReference type="PROSITE" id="PS51186">
    <property type="entry name" value="GNAT"/>
    <property type="match status" value="1"/>
</dbReference>
<name>NAA50_HUMAN</name>
<gene>
    <name evidence="20" type="primary">NAA50</name>
    <name evidence="18" type="synonym">MAK3</name>
    <name type="synonym">NAT13</name>
    <name evidence="14" type="synonym">NAT5</name>
</gene>
<keyword id="KW-0002">3D-structure</keyword>
<keyword id="KW-0007">Acetylation</keyword>
<keyword id="KW-0012">Acyltransferase</keyword>
<keyword id="KW-0025">Alternative splicing</keyword>
<keyword id="KW-0963">Cytoplasm</keyword>
<keyword id="KW-0539">Nucleus</keyword>
<keyword id="KW-0597">Phosphoprotein</keyword>
<keyword id="KW-1267">Proteomics identification</keyword>
<keyword id="KW-1185">Reference proteome</keyword>
<keyword id="KW-0808">Transferase</keyword>
<accession>Q9GZZ1</accession>
<accession>D3DN74</accession>
<accession>Q68DQ1</accession>
<sequence>MKGSRIELGDVTPHNIKQLKRLNQVIFPVSYNDKFYKDVLEVGELAKLAYFNDIAVGAVCCRVDHSQNQKRLYIMTLGCLAPYRRLGIGTKMLNHVLNICEKDGTFDNIYLHVQISNESAIDFYRKFGFEIIETKKNYYKRIEPADAHVLQKNLKVPSGQNADVQKTDN</sequence>
<comment type="function">
    <text evidence="3 4 5 6 7 9 10 11 12">N-alpha-acetyltransferase that acetylates the N-terminus of proteins that retain their initiating methionine (PubMed:19744929, PubMed:21900231, PubMed:22311970, PubMed:27484799). Has a broad substrate specificity: able to acetylate the initiator methionine of most peptides, except for those with a proline in second position (PubMed:27484799). Also displays N-epsilon-acetyltransferase activity by mediating acetylation of the side chain of specific lysines on proteins (PubMed:19744929). Autoacetylates in vivo (PubMed:19744929). The relevance of N-epsilon-acetyltransferase activity is however unclear: able to acetylate H4 in vitro, but this result has not been confirmed in vivo (PubMed:19744929). Component of N-alpha-acetyltransferase complexes containing NAA10 and NAA15, which has N-alpha-acetyltransferase activity (PubMed:16507339, PubMed:27484799, PubMed:29754825, PubMed:32042062). Does not influence the acetyltransferase activity of NAA10 (PubMed:16507339, PubMed:27484799). However, it negatively regulates the N-alpha-acetyltransferase activity of the N-terminal acetyltransferase A complex (also called the NatA complex) (PubMed:32042062). The multiprotein complexes probably constitute the major contributor for N-terminal acetylation at the ribosome exit tunnel, with NAA10 acetylating all amino termini that are devoid of methionine and NAA50 acetylating other peptides (PubMed:16507339, PubMed:27484799). Required for sister chromatid cohesion during mitosis by promoting binding of CDCA5/sororin to cohesin: may act by counteracting the function of NAA10 (PubMed:17502424, PubMed:27422821).</text>
</comment>
<comment type="catalytic activity">
    <reaction evidence="5 6 7 10">
        <text>N-terminal L-methionyl-L-alanyl-[protein] + acetyl-CoA = N-terminal N(alpha)-acetyl-L-methionyl-L-alanyl-[protein] + CoA + H(+)</text>
        <dbReference type="Rhea" id="RHEA:50564"/>
        <dbReference type="Rhea" id="RHEA-COMP:12726"/>
        <dbReference type="Rhea" id="RHEA-COMP:12727"/>
        <dbReference type="ChEBI" id="CHEBI:15378"/>
        <dbReference type="ChEBI" id="CHEBI:57287"/>
        <dbReference type="ChEBI" id="CHEBI:57288"/>
        <dbReference type="ChEBI" id="CHEBI:133398"/>
        <dbReference type="ChEBI" id="CHEBI:133399"/>
        <dbReference type="EC" id="2.3.1.258"/>
    </reaction>
</comment>
<comment type="catalytic activity">
    <reaction evidence="5 6 7 10">
        <text>N-terminal L-methionyl-L-seryl-[protein] + acetyl-CoA = N-terminal N(alpha)-acetyl-L-methionyl-L-seryl-[protein] + CoA + H(+)</text>
        <dbReference type="Rhea" id="RHEA:50568"/>
        <dbReference type="Rhea" id="RHEA-COMP:12728"/>
        <dbReference type="Rhea" id="RHEA-COMP:12729"/>
        <dbReference type="ChEBI" id="CHEBI:15378"/>
        <dbReference type="ChEBI" id="CHEBI:57287"/>
        <dbReference type="ChEBI" id="CHEBI:57288"/>
        <dbReference type="ChEBI" id="CHEBI:133400"/>
        <dbReference type="ChEBI" id="CHEBI:133401"/>
        <dbReference type="EC" id="2.3.1.258"/>
    </reaction>
</comment>
<comment type="catalytic activity">
    <reaction evidence="5 6 7 10">
        <text>N-terminal L-methionyl-L-valyl-[protein] + acetyl-CoA = N-terminal N(alpha)-acetyl-L-methionyl-L-valyl-[protein] + CoA + H(+)</text>
        <dbReference type="Rhea" id="RHEA:50572"/>
        <dbReference type="Rhea" id="RHEA-COMP:12730"/>
        <dbReference type="Rhea" id="RHEA-COMP:12731"/>
        <dbReference type="ChEBI" id="CHEBI:15378"/>
        <dbReference type="ChEBI" id="CHEBI:57287"/>
        <dbReference type="ChEBI" id="CHEBI:57288"/>
        <dbReference type="ChEBI" id="CHEBI:133402"/>
        <dbReference type="ChEBI" id="CHEBI:133403"/>
        <dbReference type="EC" id="2.3.1.258"/>
    </reaction>
</comment>
<comment type="catalytic activity">
    <reaction evidence="5 6 7 10">
        <text>N-terminal L-methionyl-L-threonyl-[protein] + acetyl-CoA = N-terminal N(alpha)-acetyl-L-methionyl-L-threonyl-[protein] + CoA + H(+)</text>
        <dbReference type="Rhea" id="RHEA:50576"/>
        <dbReference type="Rhea" id="RHEA-COMP:12732"/>
        <dbReference type="Rhea" id="RHEA-COMP:12733"/>
        <dbReference type="ChEBI" id="CHEBI:15378"/>
        <dbReference type="ChEBI" id="CHEBI:57287"/>
        <dbReference type="ChEBI" id="CHEBI:57288"/>
        <dbReference type="ChEBI" id="CHEBI:133404"/>
        <dbReference type="ChEBI" id="CHEBI:133405"/>
        <dbReference type="EC" id="2.3.1.258"/>
    </reaction>
</comment>
<comment type="catalytic activity">
    <reaction evidence="5 6 7 10">
        <text>N-terminal L-methionyl-L-lysyl-[protein] + acetyl-CoA = N-terminal N(alpha)-acetyl-L-methionyl-L-lysyl-[protein] + CoA + H(+)</text>
        <dbReference type="Rhea" id="RHEA:50580"/>
        <dbReference type="Rhea" id="RHEA-COMP:12734"/>
        <dbReference type="Rhea" id="RHEA-COMP:12735"/>
        <dbReference type="ChEBI" id="CHEBI:15378"/>
        <dbReference type="ChEBI" id="CHEBI:57287"/>
        <dbReference type="ChEBI" id="CHEBI:57288"/>
        <dbReference type="ChEBI" id="CHEBI:133406"/>
        <dbReference type="ChEBI" id="CHEBI:133407"/>
        <dbReference type="EC" id="2.3.1.258"/>
    </reaction>
</comment>
<comment type="catalytic activity">
    <reaction evidence="5 6 7 10">
        <text>N-terminal L-methionyl-L-leucyl-[protein] + acetyl-CoA = N-terminal N(alpha)-acetyl-L-methionyl-L-leucyl-[protein] + CoA + H(+)</text>
        <dbReference type="Rhea" id="RHEA:50520"/>
        <dbReference type="Rhea" id="RHEA-COMP:12711"/>
        <dbReference type="Rhea" id="RHEA-COMP:12712"/>
        <dbReference type="ChEBI" id="CHEBI:15378"/>
        <dbReference type="ChEBI" id="CHEBI:57287"/>
        <dbReference type="ChEBI" id="CHEBI:57288"/>
        <dbReference type="ChEBI" id="CHEBI:133377"/>
        <dbReference type="ChEBI" id="CHEBI:133378"/>
        <dbReference type="EC" id="2.3.1.258"/>
    </reaction>
</comment>
<comment type="catalytic activity">
    <reaction evidence="5 6 7 10">
        <text>N-terminal L-methionyl-L-phenylalanyl-[protein] + acetyl-CoA = N-terminal N(alpha)-acetyl-L-methionyl-L-phenylalanyl-[protein] + CoA + H(+)</text>
        <dbReference type="Rhea" id="RHEA:50528"/>
        <dbReference type="Rhea" id="RHEA-COMP:12715"/>
        <dbReference type="Rhea" id="RHEA-COMP:12716"/>
        <dbReference type="ChEBI" id="CHEBI:15378"/>
        <dbReference type="ChEBI" id="CHEBI:57287"/>
        <dbReference type="ChEBI" id="CHEBI:57288"/>
        <dbReference type="ChEBI" id="CHEBI:133382"/>
        <dbReference type="ChEBI" id="CHEBI:133383"/>
        <dbReference type="EC" id="2.3.1.258"/>
    </reaction>
</comment>
<comment type="catalytic activity">
    <reaction evidence="5 6 7 10">
        <text>N-terminal L-methionyl-L-tyrosyl-[protein] + acetyl-CoA = N-terminal N(alpha)-acetyl-L-methionyl-L-tyrosyl-[protein] + CoA + H(+)</text>
        <dbReference type="Rhea" id="RHEA:50532"/>
        <dbReference type="Rhea" id="RHEA-COMP:12717"/>
        <dbReference type="Rhea" id="RHEA-COMP:12718"/>
        <dbReference type="ChEBI" id="CHEBI:15378"/>
        <dbReference type="ChEBI" id="CHEBI:57287"/>
        <dbReference type="ChEBI" id="CHEBI:57288"/>
        <dbReference type="ChEBI" id="CHEBI:133384"/>
        <dbReference type="ChEBI" id="CHEBI:133385"/>
        <dbReference type="EC" id="2.3.1.258"/>
    </reaction>
</comment>
<comment type="biophysicochemical properties">
    <kinetics>
        <KM evidence="10">132.6 uM for M-A-A-A peptide</KM>
        <KM evidence="10">126.1 uM for L-A-A-A peptide</KM>
        <KM evidence="7">5 uM for Acetyl-CoA</KM>
        <KM evidence="5">79 uM for M-L-G-P-E peptide</KM>
        <KM evidence="5">91 uM for M-L-D-P-E peptide</KM>
        <KM evidence="5">185 uM for M-I-G-P-E peptide</KM>
        <KM evidence="5">190 uM for M-L-A-L-I peptide</KM>
        <KM evidence="5">320 uM for M-L-G-T-G peptide</KM>
        <KM evidence="5">416 uM for M-L-G-T-E peptide</KM>
        <KM evidence="5">460 uM for M-L-R-P-E peptide</KM>
        <KM evidence="5">478 uM for M-L-L-P-E peptide</KM>
        <KM evidence="5">3734 uM for M-F-G-P-E peptide</KM>
        <text evidence="5">kcat is 7.2 min(-1) with M-L-G-P-E peptide. kcat is 7.2 min(-1) with M-L-D-P-E peptide. kcat is 10.9 min(-1) with M-I-G-P-E peptide. kcat is 6.8 min(-1) with M-L-A-L-I peptide. kcat is 2.3 min(-1) with M-L-G-T-G peptide. kcat is 5.6 min(-1) with M-L-G-T-E peptide.</text>
    </kinetics>
    <phDependence>
        <text evidence="6">Optimum pH is 7.5-8.0.</text>
    </phDependence>
</comment>
<comment type="subunit">
    <text evidence="1 3 11 12">Component of the N-terminal acetyltransferase E (NatE) complex at least composed of NAA10, NAA15 and NAA50 (PubMed:16507339, PubMed:29754825, PubMed:32042062). Interacts with NAA10 (PubMed:16507339, PubMed:32042062). Interacts with NAA15 (PubMed:16507339, PubMed:29754825, PubMed:32042062). Predominantly interacts with NAA15 in the N-terminal acetyltransferase A complex (NatA complex); the interactions reduce the acetylation activity of the NatA complex (PubMed:16507339, PubMed:32042062). Component of the N-terminal acetyltransferase E (NatE)/HYPK complex at least composed of NAA10, NAA15, NAA50 and HYPK (PubMed:32042062). Within the complex interacts with NAA15 (PubMed:32042062). Its capacity to interact with the NatA complex is reduced by HYPK (PubMed:32042062). Interacts with NAA35 (By similarity).</text>
</comment>
<comment type="interaction">
    <interactant intactId="EBI-1052523">
        <id>Q9GZZ1</id>
    </interactant>
    <interactant intactId="EBI-711810">
        <id>O14503</id>
        <label>BHLHE40</label>
    </interactant>
    <organismsDiffer>false</organismsDiffer>
    <experiments>6</experiments>
</comment>
<comment type="interaction">
    <interactant intactId="EBI-1052523">
        <id>Q9GZZ1</id>
    </interactant>
    <interactant intactId="EBI-8464037">
        <id>Q6NYC1</id>
        <label>JMJD6</label>
    </interactant>
    <organismsDiffer>false</organismsDiffer>
    <experiments>6</experiments>
</comment>
<comment type="interaction">
    <interactant intactId="EBI-1052523">
        <id>Q9GZZ1</id>
    </interactant>
    <interactant intactId="EBI-747693">
        <id>P41227</id>
        <label>NAA10</label>
    </interactant>
    <organismsDiffer>false</organismsDiffer>
    <experiments>6</experiments>
</comment>
<comment type="interaction">
    <interactant intactId="EBI-1052523">
        <id>Q9GZZ1</id>
    </interactant>
    <interactant intactId="EBI-1042540">
        <id>Q9BXJ9</id>
        <label>NAA15</label>
    </interactant>
    <organismsDiffer>false</organismsDiffer>
    <experiments>5</experiments>
</comment>
<comment type="interaction">
    <interactant intactId="EBI-1052523">
        <id>Q9GZZ1</id>
    </interactant>
    <interactant intactId="EBI-2561139">
        <id>Q6N069</id>
        <label>NAA16</label>
    </interactant>
    <organismsDiffer>false</organismsDiffer>
    <experiments>2</experiments>
</comment>
<comment type="interaction">
    <interactant intactId="EBI-1052523">
        <id>Q9GZZ1</id>
    </interactant>
    <interactant intactId="EBI-9087860">
        <id>P32243-2</id>
        <label>OTX2</label>
    </interactant>
    <organismsDiffer>false</organismsDiffer>
    <experiments>3</experiments>
</comment>
<comment type="subcellular location">
    <subcellularLocation>
        <location evidence="3 4 8 9">Cytoplasm</location>
    </subcellularLocation>
    <subcellularLocation>
        <location evidence="8">Nucleus</location>
    </subcellularLocation>
    <text evidence="4">Localizes to the cytoplasm in interphase cells (PubMed:17502424).</text>
</comment>
<comment type="alternative products">
    <event type="alternative splicing"/>
    <isoform>
        <id>Q9GZZ1-1</id>
        <name>1</name>
        <sequence type="displayed"/>
    </isoform>
    <isoform>
        <id>Q9GZZ1-2</id>
        <name>2</name>
        <sequence type="described" ref="VSP_024747"/>
    </isoform>
</comment>
<comment type="similarity">
    <text evidence="19">Belongs to the acetyltransferase family. GNAT subfamily.</text>
</comment>
<organism>
    <name type="scientific">Homo sapiens</name>
    <name type="common">Human</name>
    <dbReference type="NCBI Taxonomy" id="9606"/>
    <lineage>
        <taxon>Eukaryota</taxon>
        <taxon>Metazoa</taxon>
        <taxon>Chordata</taxon>
        <taxon>Craniata</taxon>
        <taxon>Vertebrata</taxon>
        <taxon>Euteleostomi</taxon>
        <taxon>Mammalia</taxon>
        <taxon>Eutheria</taxon>
        <taxon>Euarchontoglires</taxon>
        <taxon>Primates</taxon>
        <taxon>Haplorrhini</taxon>
        <taxon>Catarrhini</taxon>
        <taxon>Hominidae</taxon>
        <taxon>Homo</taxon>
    </lineage>
</organism>